<reference key="1">
    <citation type="journal article" date="2004" name="Nat. Biotechnol.">
        <title>Complete genome sequence of the metabolically versatile photosynthetic bacterium Rhodopseudomonas palustris.</title>
        <authorList>
            <person name="Larimer F.W."/>
            <person name="Chain P."/>
            <person name="Hauser L."/>
            <person name="Lamerdin J.E."/>
            <person name="Malfatti S."/>
            <person name="Do L."/>
            <person name="Land M.L."/>
            <person name="Pelletier D.A."/>
            <person name="Beatty J.T."/>
            <person name="Lang A.S."/>
            <person name="Tabita F.R."/>
            <person name="Gibson J.L."/>
            <person name="Hanson T.E."/>
            <person name="Bobst C."/>
            <person name="Torres y Torres J.L."/>
            <person name="Peres C."/>
            <person name="Harrison F.H."/>
            <person name="Gibson J."/>
            <person name="Harwood C.S."/>
        </authorList>
    </citation>
    <scope>NUCLEOTIDE SEQUENCE [LARGE SCALE GENOMIC DNA]</scope>
    <source>
        <strain>ATCC BAA-98 / CGA009</strain>
    </source>
</reference>
<comment type="function">
    <text evidence="1">Specifically methylates the N4 position of cytidine in position 1402 (C1402) of 16S rRNA.</text>
</comment>
<comment type="catalytic activity">
    <reaction evidence="1">
        <text>cytidine(1402) in 16S rRNA + S-adenosyl-L-methionine = N(4)-methylcytidine(1402) in 16S rRNA + S-adenosyl-L-homocysteine + H(+)</text>
        <dbReference type="Rhea" id="RHEA:42928"/>
        <dbReference type="Rhea" id="RHEA-COMP:10286"/>
        <dbReference type="Rhea" id="RHEA-COMP:10287"/>
        <dbReference type="ChEBI" id="CHEBI:15378"/>
        <dbReference type="ChEBI" id="CHEBI:57856"/>
        <dbReference type="ChEBI" id="CHEBI:59789"/>
        <dbReference type="ChEBI" id="CHEBI:74506"/>
        <dbReference type="ChEBI" id="CHEBI:82748"/>
        <dbReference type="EC" id="2.1.1.199"/>
    </reaction>
</comment>
<comment type="subcellular location">
    <subcellularLocation>
        <location evidence="1">Cytoplasm</location>
    </subcellularLocation>
</comment>
<comment type="similarity">
    <text evidence="1">Belongs to the methyltransferase superfamily. RsmH family.</text>
</comment>
<dbReference type="EC" id="2.1.1.199" evidence="1"/>
<dbReference type="EMBL" id="BX572604">
    <property type="protein sequence ID" value="CAE28979.1"/>
    <property type="molecule type" value="Genomic_DNA"/>
</dbReference>
<dbReference type="RefSeq" id="WP_011159078.1">
    <property type="nucleotide sequence ID" value="NZ_CP116810.1"/>
</dbReference>
<dbReference type="SMR" id="P60398"/>
<dbReference type="STRING" id="258594.RPA3538"/>
<dbReference type="GeneID" id="66894640"/>
<dbReference type="eggNOG" id="COG0275">
    <property type="taxonomic scope" value="Bacteria"/>
</dbReference>
<dbReference type="HOGENOM" id="CLU_038422_1_1_5"/>
<dbReference type="PhylomeDB" id="P60398"/>
<dbReference type="GO" id="GO:0005737">
    <property type="term" value="C:cytoplasm"/>
    <property type="evidence" value="ECO:0007669"/>
    <property type="project" value="UniProtKB-SubCell"/>
</dbReference>
<dbReference type="GO" id="GO:0071424">
    <property type="term" value="F:rRNA (cytosine-N4-)-methyltransferase activity"/>
    <property type="evidence" value="ECO:0007669"/>
    <property type="project" value="UniProtKB-UniRule"/>
</dbReference>
<dbReference type="GO" id="GO:0070475">
    <property type="term" value="P:rRNA base methylation"/>
    <property type="evidence" value="ECO:0007669"/>
    <property type="project" value="UniProtKB-UniRule"/>
</dbReference>
<dbReference type="FunFam" id="1.10.150.170:FF:000003">
    <property type="entry name" value="Ribosomal RNA small subunit methyltransferase H"/>
    <property type="match status" value="1"/>
</dbReference>
<dbReference type="Gene3D" id="1.10.150.170">
    <property type="entry name" value="Putative methyltransferase TM0872, insert domain"/>
    <property type="match status" value="1"/>
</dbReference>
<dbReference type="Gene3D" id="3.40.50.150">
    <property type="entry name" value="Vaccinia Virus protein VP39"/>
    <property type="match status" value="1"/>
</dbReference>
<dbReference type="HAMAP" id="MF_01007">
    <property type="entry name" value="16SrRNA_methyltr_H"/>
    <property type="match status" value="1"/>
</dbReference>
<dbReference type="InterPro" id="IPR002903">
    <property type="entry name" value="RsmH"/>
</dbReference>
<dbReference type="InterPro" id="IPR023397">
    <property type="entry name" value="SAM-dep_MeTrfase_MraW_recog"/>
</dbReference>
<dbReference type="InterPro" id="IPR029063">
    <property type="entry name" value="SAM-dependent_MTases_sf"/>
</dbReference>
<dbReference type="NCBIfam" id="TIGR00006">
    <property type="entry name" value="16S rRNA (cytosine(1402)-N(4))-methyltransferase RsmH"/>
    <property type="match status" value="1"/>
</dbReference>
<dbReference type="PANTHER" id="PTHR11265:SF0">
    <property type="entry name" value="12S RRNA N4-METHYLCYTIDINE METHYLTRANSFERASE"/>
    <property type="match status" value="1"/>
</dbReference>
<dbReference type="PANTHER" id="PTHR11265">
    <property type="entry name" value="S-ADENOSYL-METHYLTRANSFERASE MRAW"/>
    <property type="match status" value="1"/>
</dbReference>
<dbReference type="Pfam" id="PF01795">
    <property type="entry name" value="Methyltransf_5"/>
    <property type="match status" value="1"/>
</dbReference>
<dbReference type="PIRSF" id="PIRSF004486">
    <property type="entry name" value="MraW"/>
    <property type="match status" value="1"/>
</dbReference>
<dbReference type="SUPFAM" id="SSF81799">
    <property type="entry name" value="Putative methyltransferase TM0872, insert domain"/>
    <property type="match status" value="1"/>
</dbReference>
<dbReference type="SUPFAM" id="SSF53335">
    <property type="entry name" value="S-adenosyl-L-methionine-dependent methyltransferases"/>
    <property type="match status" value="1"/>
</dbReference>
<accession>P60398</accession>
<proteinExistence type="inferred from homology"/>
<keyword id="KW-0963">Cytoplasm</keyword>
<keyword id="KW-0489">Methyltransferase</keyword>
<keyword id="KW-0698">rRNA processing</keyword>
<keyword id="KW-0949">S-adenosyl-L-methionine</keyword>
<keyword id="KW-0808">Transferase</keyword>
<protein>
    <recommendedName>
        <fullName evidence="1">Ribosomal RNA small subunit methyltransferase H</fullName>
        <ecNumber evidence="1">2.1.1.199</ecNumber>
    </recommendedName>
    <alternativeName>
        <fullName evidence="1">16S rRNA m(4)C1402 methyltransferase</fullName>
    </alternativeName>
    <alternativeName>
        <fullName evidence="1">rRNA (cytosine-N(4)-)-methyltransferase RsmH</fullName>
    </alternativeName>
</protein>
<name>RSMH_RHOPA</name>
<feature type="chain" id="PRO_0000108692" description="Ribosomal RNA small subunit methyltransferase H">
    <location>
        <begin position="1"/>
        <end position="332"/>
    </location>
</feature>
<feature type="region of interest" description="Disordered" evidence="2">
    <location>
        <begin position="295"/>
        <end position="322"/>
    </location>
</feature>
<feature type="binding site" evidence="1">
    <location>
        <begin position="36"/>
        <end position="38"/>
    </location>
    <ligand>
        <name>S-adenosyl-L-methionine</name>
        <dbReference type="ChEBI" id="CHEBI:59789"/>
    </ligand>
</feature>
<feature type="binding site" evidence="1">
    <location>
        <position position="54"/>
    </location>
    <ligand>
        <name>S-adenosyl-L-methionine</name>
        <dbReference type="ChEBI" id="CHEBI:59789"/>
    </ligand>
</feature>
<feature type="binding site" evidence="1">
    <location>
        <position position="81"/>
    </location>
    <ligand>
        <name>S-adenosyl-L-methionine</name>
        <dbReference type="ChEBI" id="CHEBI:59789"/>
    </ligand>
</feature>
<feature type="binding site" evidence="1">
    <location>
        <position position="102"/>
    </location>
    <ligand>
        <name>S-adenosyl-L-methionine</name>
        <dbReference type="ChEBI" id="CHEBI:59789"/>
    </ligand>
</feature>
<feature type="binding site" evidence="1">
    <location>
        <position position="109"/>
    </location>
    <ligand>
        <name>S-adenosyl-L-methionine</name>
        <dbReference type="ChEBI" id="CHEBI:59789"/>
    </ligand>
</feature>
<gene>
    <name evidence="1" type="primary">rsmH</name>
    <name type="synonym">mraW</name>
    <name type="ordered locus">RPA3538</name>
</gene>
<evidence type="ECO:0000255" key="1">
    <source>
        <dbReference type="HAMAP-Rule" id="MF_01007"/>
    </source>
</evidence>
<evidence type="ECO:0000256" key="2">
    <source>
        <dbReference type="SAM" id="MobiDB-lite"/>
    </source>
</evidence>
<sequence length="332" mass="35048">MKPSDARHIPVLGPEAVGLLAPRAGGIYVDGTFGAGGYTRLILETAGSRVIAIDRDPSAIAGGADLVTEAGGRLTLVQDRFSNLADVCAAQGAATVDGVVMDIGVSSMQLDQAERGFSFRFDGPLDMRMGRDGPSAADVVARASETDLANIIYIFGEERYSRHVARAIVAARSETPITTTKALADIVAKVVRAKPGEIHPATRTFQGLRIFVNEELDELHQALDAAERVLKPSGRLAVVSFHSLEDRIVKTFLAERSKTGGGSRHLPEVAQAAPSFTLLSKRPIVAGDAEVAANPRARSAKLRGAERTESPAHAAGDLPGWPTLASVMRAGR</sequence>
<organism>
    <name type="scientific">Rhodopseudomonas palustris (strain ATCC BAA-98 / CGA009)</name>
    <dbReference type="NCBI Taxonomy" id="258594"/>
    <lineage>
        <taxon>Bacteria</taxon>
        <taxon>Pseudomonadati</taxon>
        <taxon>Pseudomonadota</taxon>
        <taxon>Alphaproteobacteria</taxon>
        <taxon>Hyphomicrobiales</taxon>
        <taxon>Nitrobacteraceae</taxon>
        <taxon>Rhodopseudomonas</taxon>
    </lineage>
</organism>